<proteinExistence type="inferred from homology"/>
<comment type="similarity">
    <text evidence="1">Belongs to the UPF0178 family.</text>
</comment>
<name>Y3021_BACCN</name>
<reference key="1">
    <citation type="journal article" date="2008" name="Chem. Biol. Interact.">
        <title>Extending the Bacillus cereus group genomics to putative food-borne pathogens of different toxicity.</title>
        <authorList>
            <person name="Lapidus A."/>
            <person name="Goltsman E."/>
            <person name="Auger S."/>
            <person name="Galleron N."/>
            <person name="Segurens B."/>
            <person name="Dossat C."/>
            <person name="Land M.L."/>
            <person name="Broussolle V."/>
            <person name="Brillard J."/>
            <person name="Guinebretiere M.-H."/>
            <person name="Sanchis V."/>
            <person name="Nguen-the C."/>
            <person name="Lereclus D."/>
            <person name="Richardson P."/>
            <person name="Wincker P."/>
            <person name="Weissenbach J."/>
            <person name="Ehrlich S.D."/>
            <person name="Sorokin A."/>
        </authorList>
    </citation>
    <scope>NUCLEOTIDE SEQUENCE [LARGE SCALE GENOMIC DNA]</scope>
    <source>
        <strain>DSM 22905 / CIP 110041 / 391-98 / NVH 391-98</strain>
    </source>
</reference>
<sequence length="152" mass="17376">MQNISKILVDADACPVKDEIVQIGTKFHVEILFVASYAHRSRKQQGNWIYVDSEQDEVDFYIYKHAKATDLVITQDMGLAGLLVKKGVYVLSPRGKFVTDEQMDTILYSRYVSAKLRRQGTYTKGPKSFSKQDRQSFLTSLEKILSNYKGIL</sequence>
<organism>
    <name type="scientific">Bacillus cytotoxicus (strain DSM 22905 / CIP 110041 / 391-98 / NVH 391-98)</name>
    <dbReference type="NCBI Taxonomy" id="315749"/>
    <lineage>
        <taxon>Bacteria</taxon>
        <taxon>Bacillati</taxon>
        <taxon>Bacillota</taxon>
        <taxon>Bacilli</taxon>
        <taxon>Bacillales</taxon>
        <taxon>Bacillaceae</taxon>
        <taxon>Bacillus</taxon>
        <taxon>Bacillus cereus group</taxon>
    </lineage>
</organism>
<evidence type="ECO:0000255" key="1">
    <source>
        <dbReference type="HAMAP-Rule" id="MF_00489"/>
    </source>
</evidence>
<dbReference type="EMBL" id="CP000764">
    <property type="protein sequence ID" value="ABS23248.1"/>
    <property type="molecule type" value="Genomic_DNA"/>
</dbReference>
<dbReference type="RefSeq" id="WP_012095485.1">
    <property type="nucleotide sequence ID" value="NC_009674.1"/>
</dbReference>
<dbReference type="STRING" id="315749.Bcer98_3021"/>
<dbReference type="GeneID" id="33898269"/>
<dbReference type="KEGG" id="bcy:Bcer98_3021"/>
<dbReference type="eggNOG" id="COG1671">
    <property type="taxonomic scope" value="Bacteria"/>
</dbReference>
<dbReference type="HOGENOM" id="CLU_106619_0_0_9"/>
<dbReference type="OrthoDB" id="9798918at2"/>
<dbReference type="Proteomes" id="UP000002300">
    <property type="component" value="Chromosome"/>
</dbReference>
<dbReference type="CDD" id="cd18720">
    <property type="entry name" value="PIN_YqxD-like"/>
    <property type="match status" value="1"/>
</dbReference>
<dbReference type="HAMAP" id="MF_00489">
    <property type="entry name" value="UPF0178"/>
    <property type="match status" value="1"/>
</dbReference>
<dbReference type="InterPro" id="IPR003791">
    <property type="entry name" value="UPF0178"/>
</dbReference>
<dbReference type="NCBIfam" id="NF001095">
    <property type="entry name" value="PRK00124.1"/>
    <property type="match status" value="1"/>
</dbReference>
<dbReference type="PANTHER" id="PTHR35146">
    <property type="entry name" value="UPF0178 PROTEIN YAII"/>
    <property type="match status" value="1"/>
</dbReference>
<dbReference type="PANTHER" id="PTHR35146:SF1">
    <property type="entry name" value="UPF0178 PROTEIN YAII"/>
    <property type="match status" value="1"/>
</dbReference>
<dbReference type="Pfam" id="PF02639">
    <property type="entry name" value="DUF188"/>
    <property type="match status" value="1"/>
</dbReference>
<accession>A7GSZ0</accession>
<feature type="chain" id="PRO_1000081372" description="UPF0178 protein Bcer98_3021">
    <location>
        <begin position="1"/>
        <end position="152"/>
    </location>
</feature>
<gene>
    <name type="ordered locus">Bcer98_3021</name>
</gene>
<protein>
    <recommendedName>
        <fullName evidence="1">UPF0178 protein Bcer98_3021</fullName>
    </recommendedName>
</protein>